<feature type="chain" id="PRO_0000127108" description="Hemiptericin">
    <location>
        <begin position="1"/>
        <end position="133"/>
    </location>
</feature>
<reference key="1">
    <citation type="journal article" date="1994" name="Biochem. J.">
        <title>Novel inducible antibacterial peptides from a hemipteran insect, the sap-sucking bug Pyrrhocoris apterus.</title>
        <authorList>
            <person name="Cociancich S."/>
            <person name="Dupont A."/>
            <person name="Hegy G."/>
            <person name="Lanot R."/>
            <person name="Holder F."/>
            <person name="Hetru C."/>
            <person name="Hoffmann J.A."/>
            <person name="Bulet P."/>
        </authorList>
    </citation>
    <scope>PROTEIN SEQUENCE</scope>
    <source>
        <tissue>Hemolymph</tissue>
    </source>
</reference>
<sequence>DVELKGKGGENEGFVGLKAQRNLYEDDRTSLSGTVKGQSQWKDPYPAQHAGMARLDGTRTLIENDRTKVTGSGFAQREVATGMRPHDSFGVGVEATHNIYKGKNGEVDVFGGVQRQWNTPDRHQARGGIRWRF</sequence>
<comment type="function">
    <text>Antibacterial peptide. Affects Gram-negative bacteria.</text>
</comment>
<dbReference type="PIR" id="S44464">
    <property type="entry name" value="S44464"/>
</dbReference>
<dbReference type="GO" id="GO:0042742">
    <property type="term" value="P:defense response to bacterium"/>
    <property type="evidence" value="ECO:0007669"/>
    <property type="project" value="UniProtKB-KW"/>
</dbReference>
<dbReference type="GO" id="GO:0045087">
    <property type="term" value="P:innate immune response"/>
    <property type="evidence" value="ECO:0007669"/>
    <property type="project" value="UniProtKB-KW"/>
</dbReference>
<accession>P37363</accession>
<accession>P80309</accession>
<protein>
    <recommendedName>
        <fullName>Hemiptericin</fullName>
    </recommendedName>
</protein>
<keyword id="KW-0044">Antibiotic</keyword>
<keyword id="KW-0929">Antimicrobial</keyword>
<keyword id="KW-0903">Direct protein sequencing</keyword>
<keyword id="KW-0391">Immunity</keyword>
<keyword id="KW-0399">Innate immunity</keyword>
<organism>
    <name type="scientific">Pyrrhocoris apterus</name>
    <name type="common">Sap sucking bug</name>
    <name type="synonym">Cimex apterus</name>
    <dbReference type="NCBI Taxonomy" id="37000"/>
    <lineage>
        <taxon>Eukaryota</taxon>
        <taxon>Metazoa</taxon>
        <taxon>Ecdysozoa</taxon>
        <taxon>Arthropoda</taxon>
        <taxon>Hexapoda</taxon>
        <taxon>Insecta</taxon>
        <taxon>Pterygota</taxon>
        <taxon>Neoptera</taxon>
        <taxon>Paraneoptera</taxon>
        <taxon>Hemiptera</taxon>
        <taxon>Heteroptera</taxon>
        <taxon>Panheteroptera</taxon>
        <taxon>Pentatomomorpha</taxon>
        <taxon>Pyrrhocoroidea</taxon>
        <taxon>Pyrrhocoridae</taxon>
        <taxon>Pyrrhocoris</taxon>
    </lineage>
</organism>
<proteinExistence type="evidence at protein level"/>
<name>HEMI_PYRAP</name>